<comment type="function">
    <text evidence="1">Catalyzes the decarboxylation of four acetate groups of uroporphyrinogen-III to yield coproporphyrinogen-III.</text>
</comment>
<comment type="catalytic activity">
    <reaction evidence="1">
        <text>uroporphyrinogen III + 4 H(+) = coproporphyrinogen III + 4 CO2</text>
        <dbReference type="Rhea" id="RHEA:19865"/>
        <dbReference type="ChEBI" id="CHEBI:15378"/>
        <dbReference type="ChEBI" id="CHEBI:16526"/>
        <dbReference type="ChEBI" id="CHEBI:57308"/>
        <dbReference type="ChEBI" id="CHEBI:57309"/>
        <dbReference type="EC" id="4.1.1.37"/>
    </reaction>
</comment>
<comment type="pathway">
    <text evidence="1">Porphyrin-containing compound metabolism; protoporphyrin-IX biosynthesis; coproporphyrinogen-III from 5-aminolevulinate: step 4/4.</text>
</comment>
<comment type="subunit">
    <text evidence="1">Homodimer.</text>
</comment>
<comment type="subcellular location">
    <subcellularLocation>
        <location evidence="1">Cytoplasm</location>
    </subcellularLocation>
</comment>
<comment type="similarity">
    <text evidence="1">Belongs to the uroporphyrinogen decarboxylase family.</text>
</comment>
<keyword id="KW-0963">Cytoplasm</keyword>
<keyword id="KW-0210">Decarboxylase</keyword>
<keyword id="KW-0456">Lyase</keyword>
<keyword id="KW-0627">Porphyrin biosynthesis</keyword>
<feature type="chain" id="PRO_1000023887" description="Uroporphyrinogen decarboxylase">
    <location>
        <begin position="1"/>
        <end position="340"/>
    </location>
</feature>
<feature type="binding site" evidence="1">
    <location>
        <begin position="21"/>
        <end position="25"/>
    </location>
    <ligand>
        <name>substrate</name>
    </ligand>
</feature>
<feature type="binding site" evidence="1">
    <location>
        <position position="71"/>
    </location>
    <ligand>
        <name>substrate</name>
    </ligand>
</feature>
<feature type="binding site" evidence="1">
    <location>
        <position position="148"/>
    </location>
    <ligand>
        <name>substrate</name>
    </ligand>
</feature>
<feature type="binding site" evidence="1">
    <location>
        <position position="203"/>
    </location>
    <ligand>
        <name>substrate</name>
    </ligand>
</feature>
<feature type="binding site" evidence="1">
    <location>
        <position position="316"/>
    </location>
    <ligand>
        <name>substrate</name>
    </ligand>
</feature>
<feature type="site" description="Transition state stabilizer" evidence="1">
    <location>
        <position position="71"/>
    </location>
</feature>
<protein>
    <recommendedName>
        <fullName evidence="1">Uroporphyrinogen decarboxylase</fullName>
        <shortName evidence="1">UPD</shortName>
        <shortName evidence="1">URO-D</shortName>
        <ecNumber evidence="1">4.1.1.37</ecNumber>
    </recommendedName>
</protein>
<accession>A7ZEJ7</accession>
<organism>
    <name type="scientific">Campylobacter concisus (strain 13826)</name>
    <dbReference type="NCBI Taxonomy" id="360104"/>
    <lineage>
        <taxon>Bacteria</taxon>
        <taxon>Pseudomonadati</taxon>
        <taxon>Campylobacterota</taxon>
        <taxon>Epsilonproteobacteria</taxon>
        <taxon>Campylobacterales</taxon>
        <taxon>Campylobacteraceae</taxon>
        <taxon>Campylobacter</taxon>
    </lineage>
</organism>
<name>DCUP_CAMC1</name>
<gene>
    <name evidence="1" type="primary">hemE</name>
    <name type="ordered locus">Ccon26_13560</name>
    <name type="ORF">CCC13826_1013</name>
</gene>
<proteinExistence type="inferred from homology"/>
<reference key="1">
    <citation type="submission" date="2007-10" db="EMBL/GenBank/DDBJ databases">
        <title>Genome sequence of Campylobacter concisus 13826 isolated from human feces.</title>
        <authorList>
            <person name="Fouts D.E."/>
            <person name="Mongodin E.F."/>
            <person name="Puiu D."/>
            <person name="Sebastian Y."/>
            <person name="Miller W.G."/>
            <person name="Mandrell R.E."/>
            <person name="On S."/>
            <person name="Nelson K.E."/>
        </authorList>
    </citation>
    <scope>NUCLEOTIDE SEQUENCE [LARGE SCALE GENOMIC DNA]</scope>
    <source>
        <strain>13826</strain>
    </source>
</reference>
<sequence>MIFIDACLKKPTPYTPVWMMRQAGRYLPEYMAVRAKAGDFLSLCKDYKKASEVTLQPVEILGVDAAILFSDILVVPLEMGMDLRFEKGEGPVFTKPLRDEAALDALSIERSVKSLAYVYDTIKLTRENLAKDKALIGFCGAPWTIATYMIEGGGSKNYAVCKKMLYENPEFLHQILEKVTQALILYIKEQIKAGVNAVQIFDSWAAALEEQAYFEFGFSYINKIVDSVKAEFPDIPVIVFPKGISGYLDKISGKFDVFGVDWSTPIELAKEKLSPRYVLQGNMEPTRLYSKKAIDEGVDKILSTMRGAPHIFNLGHGILPDVPVENAKYFIKEVQRKSAR</sequence>
<evidence type="ECO:0000255" key="1">
    <source>
        <dbReference type="HAMAP-Rule" id="MF_00218"/>
    </source>
</evidence>
<dbReference type="EC" id="4.1.1.37" evidence="1"/>
<dbReference type="EMBL" id="CP000792">
    <property type="protein sequence ID" value="EAT97284.1"/>
    <property type="molecule type" value="Genomic_DNA"/>
</dbReference>
<dbReference type="RefSeq" id="WP_012140109.1">
    <property type="nucleotide sequence ID" value="NC_009802.2"/>
</dbReference>
<dbReference type="SMR" id="A7ZEJ7"/>
<dbReference type="STRING" id="360104.CCC13826_1013"/>
<dbReference type="KEGG" id="cco:CCC13826_1013"/>
<dbReference type="eggNOG" id="COG0407">
    <property type="taxonomic scope" value="Bacteria"/>
</dbReference>
<dbReference type="HOGENOM" id="CLU_040933_0_0_7"/>
<dbReference type="OrthoDB" id="9806656at2"/>
<dbReference type="UniPathway" id="UPA00251">
    <property type="reaction ID" value="UER00321"/>
</dbReference>
<dbReference type="Proteomes" id="UP000001121">
    <property type="component" value="Chromosome"/>
</dbReference>
<dbReference type="GO" id="GO:0005829">
    <property type="term" value="C:cytosol"/>
    <property type="evidence" value="ECO:0007669"/>
    <property type="project" value="TreeGrafter"/>
</dbReference>
<dbReference type="GO" id="GO:0004853">
    <property type="term" value="F:uroporphyrinogen decarboxylase activity"/>
    <property type="evidence" value="ECO:0007669"/>
    <property type="project" value="UniProtKB-UniRule"/>
</dbReference>
<dbReference type="GO" id="GO:0019353">
    <property type="term" value="P:protoporphyrinogen IX biosynthetic process from glutamate"/>
    <property type="evidence" value="ECO:0007669"/>
    <property type="project" value="TreeGrafter"/>
</dbReference>
<dbReference type="CDD" id="cd00717">
    <property type="entry name" value="URO-D"/>
    <property type="match status" value="1"/>
</dbReference>
<dbReference type="FunFam" id="3.20.20.210:FF:000007">
    <property type="entry name" value="Uroporphyrinogen decarboxylase"/>
    <property type="match status" value="1"/>
</dbReference>
<dbReference type="Gene3D" id="3.20.20.210">
    <property type="match status" value="1"/>
</dbReference>
<dbReference type="HAMAP" id="MF_00218">
    <property type="entry name" value="URO_D"/>
    <property type="match status" value="1"/>
</dbReference>
<dbReference type="InterPro" id="IPR038071">
    <property type="entry name" value="UROD/MetE-like_sf"/>
</dbReference>
<dbReference type="InterPro" id="IPR006361">
    <property type="entry name" value="Uroporphyrinogen_deCO2ase_HemE"/>
</dbReference>
<dbReference type="InterPro" id="IPR000257">
    <property type="entry name" value="Uroporphyrinogen_deCOase"/>
</dbReference>
<dbReference type="NCBIfam" id="TIGR01464">
    <property type="entry name" value="hemE"/>
    <property type="match status" value="1"/>
</dbReference>
<dbReference type="PANTHER" id="PTHR21091">
    <property type="entry name" value="METHYLTETRAHYDROFOLATE:HOMOCYSTEINE METHYLTRANSFERASE RELATED"/>
    <property type="match status" value="1"/>
</dbReference>
<dbReference type="PANTHER" id="PTHR21091:SF169">
    <property type="entry name" value="UROPORPHYRINOGEN DECARBOXYLASE"/>
    <property type="match status" value="1"/>
</dbReference>
<dbReference type="Pfam" id="PF01208">
    <property type="entry name" value="URO-D"/>
    <property type="match status" value="1"/>
</dbReference>
<dbReference type="SUPFAM" id="SSF51726">
    <property type="entry name" value="UROD/MetE-like"/>
    <property type="match status" value="1"/>
</dbReference>
<dbReference type="PROSITE" id="PS00906">
    <property type="entry name" value="UROD_1"/>
    <property type="match status" value="1"/>
</dbReference>
<dbReference type="PROSITE" id="PS00907">
    <property type="entry name" value="UROD_2"/>
    <property type="match status" value="1"/>
</dbReference>